<proteinExistence type="inferred from homology"/>
<dbReference type="EMBL" id="AE009948">
    <property type="protein sequence ID" value="AAM98984.1"/>
    <property type="molecule type" value="Genomic_DNA"/>
</dbReference>
<dbReference type="RefSeq" id="NP_687112.1">
    <property type="nucleotide sequence ID" value="NC_004116.1"/>
</dbReference>
<dbReference type="RefSeq" id="WP_000057245.1">
    <property type="nucleotide sequence ID" value="NC_004116.1"/>
</dbReference>
<dbReference type="SMR" id="Q8E2B6"/>
<dbReference type="STRING" id="208435.SAG0076"/>
<dbReference type="GeneID" id="66885036"/>
<dbReference type="KEGG" id="sag:SAG0076"/>
<dbReference type="PATRIC" id="fig|208435.3.peg.75"/>
<dbReference type="HOGENOM" id="CLU_131047_2_1_9"/>
<dbReference type="OrthoDB" id="9812790at2"/>
<dbReference type="Proteomes" id="UP000000821">
    <property type="component" value="Chromosome"/>
</dbReference>
<dbReference type="GO" id="GO:0022625">
    <property type="term" value="C:cytosolic large ribosomal subunit"/>
    <property type="evidence" value="ECO:0007669"/>
    <property type="project" value="TreeGrafter"/>
</dbReference>
<dbReference type="GO" id="GO:0003735">
    <property type="term" value="F:structural constituent of ribosome"/>
    <property type="evidence" value="ECO:0007669"/>
    <property type="project" value="InterPro"/>
</dbReference>
<dbReference type="GO" id="GO:0006412">
    <property type="term" value="P:translation"/>
    <property type="evidence" value="ECO:0007669"/>
    <property type="project" value="UniProtKB-UniRule"/>
</dbReference>
<dbReference type="CDD" id="cd01658">
    <property type="entry name" value="Ribosomal_L30"/>
    <property type="match status" value="1"/>
</dbReference>
<dbReference type="FunFam" id="3.30.1390.20:FF:000001">
    <property type="entry name" value="50S ribosomal protein L30"/>
    <property type="match status" value="1"/>
</dbReference>
<dbReference type="Gene3D" id="3.30.1390.20">
    <property type="entry name" value="Ribosomal protein L30, ferredoxin-like fold domain"/>
    <property type="match status" value="1"/>
</dbReference>
<dbReference type="HAMAP" id="MF_01371_B">
    <property type="entry name" value="Ribosomal_uL30_B"/>
    <property type="match status" value="1"/>
</dbReference>
<dbReference type="InterPro" id="IPR036919">
    <property type="entry name" value="Ribo_uL30_ferredoxin-like_sf"/>
</dbReference>
<dbReference type="InterPro" id="IPR005996">
    <property type="entry name" value="Ribosomal_uL30_bac-type"/>
</dbReference>
<dbReference type="InterPro" id="IPR018038">
    <property type="entry name" value="Ribosomal_uL30_CS"/>
</dbReference>
<dbReference type="InterPro" id="IPR016082">
    <property type="entry name" value="Ribosomal_uL30_ferredoxin-like"/>
</dbReference>
<dbReference type="NCBIfam" id="TIGR01308">
    <property type="entry name" value="rpmD_bact"/>
    <property type="match status" value="1"/>
</dbReference>
<dbReference type="PANTHER" id="PTHR15892:SF2">
    <property type="entry name" value="LARGE RIBOSOMAL SUBUNIT PROTEIN UL30M"/>
    <property type="match status" value="1"/>
</dbReference>
<dbReference type="PANTHER" id="PTHR15892">
    <property type="entry name" value="MITOCHONDRIAL RIBOSOMAL PROTEIN L30"/>
    <property type="match status" value="1"/>
</dbReference>
<dbReference type="Pfam" id="PF00327">
    <property type="entry name" value="Ribosomal_L30"/>
    <property type="match status" value="1"/>
</dbReference>
<dbReference type="PIRSF" id="PIRSF002211">
    <property type="entry name" value="Ribosomal_L30_bac-type"/>
    <property type="match status" value="1"/>
</dbReference>
<dbReference type="SUPFAM" id="SSF55129">
    <property type="entry name" value="Ribosomal protein L30p/L7e"/>
    <property type="match status" value="1"/>
</dbReference>
<dbReference type="PROSITE" id="PS00634">
    <property type="entry name" value="RIBOSOMAL_L30"/>
    <property type="match status" value="1"/>
</dbReference>
<accession>Q8E2B6</accession>
<keyword id="KW-1185">Reference proteome</keyword>
<keyword id="KW-0687">Ribonucleoprotein</keyword>
<keyword id="KW-0689">Ribosomal protein</keyword>
<sequence>MAQIKITLTKSPIGRKPEQRKTVVALGLGKLNSSVVKEDNAAIRGMVNAISHLVTVEEA</sequence>
<name>RL30_STRA5</name>
<comment type="subunit">
    <text evidence="1">Part of the 50S ribosomal subunit.</text>
</comment>
<comment type="similarity">
    <text evidence="1">Belongs to the universal ribosomal protein uL30 family.</text>
</comment>
<organism>
    <name type="scientific">Streptococcus agalactiae serotype V (strain ATCC BAA-611 / 2603 V/R)</name>
    <dbReference type="NCBI Taxonomy" id="208435"/>
    <lineage>
        <taxon>Bacteria</taxon>
        <taxon>Bacillati</taxon>
        <taxon>Bacillota</taxon>
        <taxon>Bacilli</taxon>
        <taxon>Lactobacillales</taxon>
        <taxon>Streptococcaceae</taxon>
        <taxon>Streptococcus</taxon>
    </lineage>
</organism>
<reference key="1">
    <citation type="journal article" date="2002" name="Proc. Natl. Acad. Sci. U.S.A.">
        <title>Complete genome sequence and comparative genomic analysis of an emerging human pathogen, serotype V Streptococcus agalactiae.</title>
        <authorList>
            <person name="Tettelin H."/>
            <person name="Masignani V."/>
            <person name="Cieslewicz M.J."/>
            <person name="Eisen J.A."/>
            <person name="Peterson S.N."/>
            <person name="Wessels M.R."/>
            <person name="Paulsen I.T."/>
            <person name="Nelson K.E."/>
            <person name="Margarit I."/>
            <person name="Read T.D."/>
            <person name="Madoff L.C."/>
            <person name="Wolf A.M."/>
            <person name="Beanan M.J."/>
            <person name="Brinkac L.M."/>
            <person name="Daugherty S.C."/>
            <person name="DeBoy R.T."/>
            <person name="Durkin A.S."/>
            <person name="Kolonay J.F."/>
            <person name="Madupu R."/>
            <person name="Lewis M.R."/>
            <person name="Radune D."/>
            <person name="Fedorova N.B."/>
            <person name="Scanlan D."/>
            <person name="Khouri H.M."/>
            <person name="Mulligan S."/>
            <person name="Carty H.A."/>
            <person name="Cline R.T."/>
            <person name="Van Aken S.E."/>
            <person name="Gill J."/>
            <person name="Scarselli M."/>
            <person name="Mora M."/>
            <person name="Iacobini E.T."/>
            <person name="Brettoni C."/>
            <person name="Galli G."/>
            <person name="Mariani M."/>
            <person name="Vegni F."/>
            <person name="Maione D."/>
            <person name="Rinaudo D."/>
            <person name="Rappuoli R."/>
            <person name="Telford J.L."/>
            <person name="Kasper D.L."/>
            <person name="Grandi G."/>
            <person name="Fraser C.M."/>
        </authorList>
    </citation>
    <scope>NUCLEOTIDE SEQUENCE [LARGE SCALE GENOMIC DNA]</scope>
    <source>
        <strain>ATCC BAA-611 / 2603 V/R</strain>
    </source>
</reference>
<evidence type="ECO:0000255" key="1">
    <source>
        <dbReference type="HAMAP-Rule" id="MF_01371"/>
    </source>
</evidence>
<evidence type="ECO:0000305" key="2"/>
<gene>
    <name evidence="1" type="primary">rpmD</name>
    <name type="ordered locus">SAG0076</name>
</gene>
<feature type="chain" id="PRO_0000273864" description="Large ribosomal subunit protein uL30">
    <location>
        <begin position="1"/>
        <end position="59"/>
    </location>
</feature>
<protein>
    <recommendedName>
        <fullName evidence="1">Large ribosomal subunit protein uL30</fullName>
    </recommendedName>
    <alternativeName>
        <fullName evidence="2">50S ribosomal protein L30</fullName>
    </alternativeName>
</protein>